<proteinExistence type="inferred from homology"/>
<keyword id="KW-0067">ATP-binding</keyword>
<keyword id="KW-0520">NAD</keyword>
<keyword id="KW-0547">Nucleotide-binding</keyword>
<keyword id="KW-0548">Nucleotidyltransferase</keyword>
<keyword id="KW-0662">Pyridine nucleotide biosynthesis</keyword>
<keyword id="KW-0808">Transferase</keyword>
<dbReference type="EC" id="2.7.7.18" evidence="1"/>
<dbReference type="EMBL" id="CP000151">
    <property type="protein sequence ID" value="ABB09218.1"/>
    <property type="molecule type" value="Genomic_DNA"/>
</dbReference>
<dbReference type="SMR" id="Q39E98"/>
<dbReference type="KEGG" id="bur:Bcep18194_A5624"/>
<dbReference type="PATRIC" id="fig|482957.22.peg.2593"/>
<dbReference type="HOGENOM" id="CLU_069765_0_0_4"/>
<dbReference type="UniPathway" id="UPA00253">
    <property type="reaction ID" value="UER00332"/>
</dbReference>
<dbReference type="Proteomes" id="UP000002705">
    <property type="component" value="Chromosome 1"/>
</dbReference>
<dbReference type="GO" id="GO:0005524">
    <property type="term" value="F:ATP binding"/>
    <property type="evidence" value="ECO:0007669"/>
    <property type="project" value="UniProtKB-KW"/>
</dbReference>
<dbReference type="GO" id="GO:0004515">
    <property type="term" value="F:nicotinate-nucleotide adenylyltransferase activity"/>
    <property type="evidence" value="ECO:0007669"/>
    <property type="project" value="UniProtKB-UniRule"/>
</dbReference>
<dbReference type="GO" id="GO:0009435">
    <property type="term" value="P:NAD biosynthetic process"/>
    <property type="evidence" value="ECO:0007669"/>
    <property type="project" value="UniProtKB-UniRule"/>
</dbReference>
<dbReference type="CDD" id="cd02165">
    <property type="entry name" value="NMNAT"/>
    <property type="match status" value="1"/>
</dbReference>
<dbReference type="Gene3D" id="3.40.50.620">
    <property type="entry name" value="HUPs"/>
    <property type="match status" value="1"/>
</dbReference>
<dbReference type="HAMAP" id="MF_00244">
    <property type="entry name" value="NaMN_adenylyltr"/>
    <property type="match status" value="1"/>
</dbReference>
<dbReference type="InterPro" id="IPR004821">
    <property type="entry name" value="Cyt_trans-like"/>
</dbReference>
<dbReference type="InterPro" id="IPR005248">
    <property type="entry name" value="NadD/NMNAT"/>
</dbReference>
<dbReference type="InterPro" id="IPR014729">
    <property type="entry name" value="Rossmann-like_a/b/a_fold"/>
</dbReference>
<dbReference type="NCBIfam" id="TIGR00125">
    <property type="entry name" value="cyt_tran_rel"/>
    <property type="match status" value="1"/>
</dbReference>
<dbReference type="NCBIfam" id="TIGR00482">
    <property type="entry name" value="nicotinate (nicotinamide) nucleotide adenylyltransferase"/>
    <property type="match status" value="1"/>
</dbReference>
<dbReference type="NCBIfam" id="NF005410">
    <property type="entry name" value="PRK06973.1"/>
    <property type="match status" value="1"/>
</dbReference>
<dbReference type="PANTHER" id="PTHR39321">
    <property type="entry name" value="NICOTINATE-NUCLEOTIDE ADENYLYLTRANSFERASE-RELATED"/>
    <property type="match status" value="1"/>
</dbReference>
<dbReference type="PANTHER" id="PTHR39321:SF3">
    <property type="entry name" value="PHOSPHOPANTETHEINE ADENYLYLTRANSFERASE"/>
    <property type="match status" value="1"/>
</dbReference>
<dbReference type="Pfam" id="PF01467">
    <property type="entry name" value="CTP_transf_like"/>
    <property type="match status" value="1"/>
</dbReference>
<dbReference type="SUPFAM" id="SSF52374">
    <property type="entry name" value="Nucleotidylyl transferase"/>
    <property type="match status" value="1"/>
</dbReference>
<evidence type="ECO:0000255" key="1">
    <source>
        <dbReference type="HAMAP-Rule" id="MF_00244"/>
    </source>
</evidence>
<comment type="function">
    <text evidence="1">Catalyzes the reversible adenylation of nicotinate mononucleotide (NaMN) to nicotinic acid adenine dinucleotide (NaAD).</text>
</comment>
<comment type="catalytic activity">
    <reaction evidence="1">
        <text>nicotinate beta-D-ribonucleotide + ATP + H(+) = deamido-NAD(+) + diphosphate</text>
        <dbReference type="Rhea" id="RHEA:22860"/>
        <dbReference type="ChEBI" id="CHEBI:15378"/>
        <dbReference type="ChEBI" id="CHEBI:30616"/>
        <dbReference type="ChEBI" id="CHEBI:33019"/>
        <dbReference type="ChEBI" id="CHEBI:57502"/>
        <dbReference type="ChEBI" id="CHEBI:58437"/>
        <dbReference type="EC" id="2.7.7.18"/>
    </reaction>
</comment>
<comment type="pathway">
    <text evidence="1">Cofactor biosynthesis; NAD(+) biosynthesis; deamido-NAD(+) from nicotinate D-ribonucleotide: step 1/1.</text>
</comment>
<comment type="similarity">
    <text evidence="1">Belongs to the NadD family.</text>
</comment>
<name>NADD_BURL3</name>
<feature type="chain" id="PRO_0000336679" description="Probable nicotinate-nucleotide adenylyltransferase">
    <location>
        <begin position="1"/>
        <end position="218"/>
    </location>
</feature>
<protein>
    <recommendedName>
        <fullName evidence="1">Probable nicotinate-nucleotide adenylyltransferase</fullName>
        <ecNumber evidence="1">2.7.7.18</ecNumber>
    </recommendedName>
    <alternativeName>
        <fullName evidence="1">Deamido-NAD(+) diphosphorylase</fullName>
    </alternativeName>
    <alternativeName>
        <fullName evidence="1">Deamido-NAD(+) pyrophosphorylase</fullName>
    </alternativeName>
    <alternativeName>
        <fullName evidence="1">Nicotinate mononucleotide adenylyltransferase</fullName>
        <shortName evidence="1">NaMN adenylyltransferase</shortName>
    </alternativeName>
</protein>
<reference key="1">
    <citation type="submission" date="2005-10" db="EMBL/GenBank/DDBJ databases">
        <title>Complete sequence of chromosome 1 of Burkholderia sp. 383.</title>
        <authorList>
            <consortium name="US DOE Joint Genome Institute"/>
            <person name="Copeland A."/>
            <person name="Lucas S."/>
            <person name="Lapidus A."/>
            <person name="Barry K."/>
            <person name="Detter J.C."/>
            <person name="Glavina T."/>
            <person name="Hammon N."/>
            <person name="Israni S."/>
            <person name="Pitluck S."/>
            <person name="Chain P."/>
            <person name="Malfatti S."/>
            <person name="Shin M."/>
            <person name="Vergez L."/>
            <person name="Schmutz J."/>
            <person name="Larimer F."/>
            <person name="Land M."/>
            <person name="Kyrpides N."/>
            <person name="Lykidis A."/>
            <person name="Richardson P."/>
        </authorList>
    </citation>
    <scope>NUCLEOTIDE SEQUENCE [LARGE SCALE GENOMIC DNA]</scope>
    <source>
        <strain>ATCC 17760 / DSM 23089 / LMG 22485 / NCIMB 9086 / R18194 / 383</strain>
    </source>
</reference>
<gene>
    <name evidence="1" type="primary">nadD</name>
    <name type="ordered locus">Bcep18194_A5624</name>
</gene>
<accession>Q39E98</accession>
<sequence>MLGGTFDPIHDGHLALARRFAELLGLTELVLLPAGQPYQKRDVSAAEHRLAMTRAAAGSLSMPGVTVTVATDEIEHVGPTYTVETLARWRERIGPDASLSLLIGADQLVRLDTWRDWRKLFDYAHICVSTRPGFDLGAAPPDVAQEITARQAGADVLKATSAGHLLIDTTLSFDIAATDIRAHLRECIARHAQMPDASAEHVPAAVWAYILQHRLYHS</sequence>
<organism>
    <name type="scientific">Burkholderia lata (strain ATCC 17760 / DSM 23089 / LMG 22485 / NCIMB 9086 / R18194 / 383)</name>
    <dbReference type="NCBI Taxonomy" id="482957"/>
    <lineage>
        <taxon>Bacteria</taxon>
        <taxon>Pseudomonadati</taxon>
        <taxon>Pseudomonadota</taxon>
        <taxon>Betaproteobacteria</taxon>
        <taxon>Burkholderiales</taxon>
        <taxon>Burkholderiaceae</taxon>
        <taxon>Burkholderia</taxon>
        <taxon>Burkholderia cepacia complex</taxon>
    </lineage>
</organism>